<keyword id="KW-0067">ATP-binding</keyword>
<keyword id="KW-0143">Chaperone</keyword>
<keyword id="KW-0479">Metal-binding</keyword>
<keyword id="KW-0547">Nucleotide-binding</keyword>
<keyword id="KW-1185">Reference proteome</keyword>
<keyword id="KW-0862">Zinc</keyword>
<evidence type="ECO:0000255" key="1">
    <source>
        <dbReference type="HAMAP-Rule" id="MF_00175"/>
    </source>
</evidence>
<evidence type="ECO:0000255" key="2">
    <source>
        <dbReference type="PROSITE-ProRule" id="PRU01250"/>
    </source>
</evidence>
<dbReference type="EMBL" id="BX950851">
    <property type="protein sequence ID" value="CAG74059.1"/>
    <property type="molecule type" value="Genomic_DNA"/>
</dbReference>
<dbReference type="RefSeq" id="WP_011092743.1">
    <property type="nucleotide sequence ID" value="NC_004547.2"/>
</dbReference>
<dbReference type="SMR" id="Q6D826"/>
<dbReference type="STRING" id="218491.ECA1149"/>
<dbReference type="GeneID" id="57207963"/>
<dbReference type="KEGG" id="eca:ECA1149"/>
<dbReference type="PATRIC" id="fig|218491.5.peg.1164"/>
<dbReference type="eggNOG" id="COG1219">
    <property type="taxonomic scope" value="Bacteria"/>
</dbReference>
<dbReference type="HOGENOM" id="CLU_014218_8_2_6"/>
<dbReference type="OrthoDB" id="9804062at2"/>
<dbReference type="Proteomes" id="UP000007966">
    <property type="component" value="Chromosome"/>
</dbReference>
<dbReference type="GO" id="GO:0009376">
    <property type="term" value="C:HslUV protease complex"/>
    <property type="evidence" value="ECO:0007669"/>
    <property type="project" value="TreeGrafter"/>
</dbReference>
<dbReference type="GO" id="GO:0005524">
    <property type="term" value="F:ATP binding"/>
    <property type="evidence" value="ECO:0007669"/>
    <property type="project" value="UniProtKB-UniRule"/>
</dbReference>
<dbReference type="GO" id="GO:0016887">
    <property type="term" value="F:ATP hydrolysis activity"/>
    <property type="evidence" value="ECO:0007669"/>
    <property type="project" value="InterPro"/>
</dbReference>
<dbReference type="GO" id="GO:0140662">
    <property type="term" value="F:ATP-dependent protein folding chaperone"/>
    <property type="evidence" value="ECO:0007669"/>
    <property type="project" value="InterPro"/>
</dbReference>
<dbReference type="GO" id="GO:0046983">
    <property type="term" value="F:protein dimerization activity"/>
    <property type="evidence" value="ECO:0007669"/>
    <property type="project" value="InterPro"/>
</dbReference>
<dbReference type="GO" id="GO:0051082">
    <property type="term" value="F:unfolded protein binding"/>
    <property type="evidence" value="ECO:0007669"/>
    <property type="project" value="UniProtKB-UniRule"/>
</dbReference>
<dbReference type="GO" id="GO:0008270">
    <property type="term" value="F:zinc ion binding"/>
    <property type="evidence" value="ECO:0007669"/>
    <property type="project" value="InterPro"/>
</dbReference>
<dbReference type="GO" id="GO:0051301">
    <property type="term" value="P:cell division"/>
    <property type="evidence" value="ECO:0007669"/>
    <property type="project" value="TreeGrafter"/>
</dbReference>
<dbReference type="GO" id="GO:0051603">
    <property type="term" value="P:proteolysis involved in protein catabolic process"/>
    <property type="evidence" value="ECO:0007669"/>
    <property type="project" value="TreeGrafter"/>
</dbReference>
<dbReference type="CDD" id="cd19497">
    <property type="entry name" value="RecA-like_ClpX"/>
    <property type="match status" value="1"/>
</dbReference>
<dbReference type="FunFam" id="1.10.8.60:FF:000002">
    <property type="entry name" value="ATP-dependent Clp protease ATP-binding subunit ClpX"/>
    <property type="match status" value="1"/>
</dbReference>
<dbReference type="FunFam" id="3.40.50.300:FF:000005">
    <property type="entry name" value="ATP-dependent Clp protease ATP-binding subunit ClpX"/>
    <property type="match status" value="1"/>
</dbReference>
<dbReference type="Gene3D" id="1.10.8.60">
    <property type="match status" value="1"/>
</dbReference>
<dbReference type="Gene3D" id="6.20.220.10">
    <property type="entry name" value="ClpX chaperone, C4-type zinc finger domain"/>
    <property type="match status" value="1"/>
</dbReference>
<dbReference type="Gene3D" id="3.40.50.300">
    <property type="entry name" value="P-loop containing nucleotide triphosphate hydrolases"/>
    <property type="match status" value="1"/>
</dbReference>
<dbReference type="HAMAP" id="MF_00175">
    <property type="entry name" value="ClpX"/>
    <property type="match status" value="1"/>
</dbReference>
<dbReference type="InterPro" id="IPR003593">
    <property type="entry name" value="AAA+_ATPase"/>
</dbReference>
<dbReference type="InterPro" id="IPR050052">
    <property type="entry name" value="ATP-dep_Clp_protease_ClpX"/>
</dbReference>
<dbReference type="InterPro" id="IPR003959">
    <property type="entry name" value="ATPase_AAA_core"/>
</dbReference>
<dbReference type="InterPro" id="IPR019489">
    <property type="entry name" value="Clp_ATPase_C"/>
</dbReference>
<dbReference type="InterPro" id="IPR004487">
    <property type="entry name" value="Clp_protease_ATP-bd_su_ClpX"/>
</dbReference>
<dbReference type="InterPro" id="IPR046425">
    <property type="entry name" value="ClpX_bact"/>
</dbReference>
<dbReference type="InterPro" id="IPR027417">
    <property type="entry name" value="P-loop_NTPase"/>
</dbReference>
<dbReference type="InterPro" id="IPR010603">
    <property type="entry name" value="Znf_CppX_C4"/>
</dbReference>
<dbReference type="InterPro" id="IPR038366">
    <property type="entry name" value="Znf_CppX_C4_sf"/>
</dbReference>
<dbReference type="NCBIfam" id="TIGR00382">
    <property type="entry name" value="clpX"/>
    <property type="match status" value="1"/>
</dbReference>
<dbReference type="NCBIfam" id="NF003745">
    <property type="entry name" value="PRK05342.1"/>
    <property type="match status" value="1"/>
</dbReference>
<dbReference type="PANTHER" id="PTHR48102:SF7">
    <property type="entry name" value="ATP-DEPENDENT CLP PROTEASE ATP-BINDING SUBUNIT CLPX-LIKE, MITOCHONDRIAL"/>
    <property type="match status" value="1"/>
</dbReference>
<dbReference type="PANTHER" id="PTHR48102">
    <property type="entry name" value="ATP-DEPENDENT CLP PROTEASE ATP-BINDING SUBUNIT CLPX-LIKE, MITOCHONDRIAL-RELATED"/>
    <property type="match status" value="1"/>
</dbReference>
<dbReference type="Pfam" id="PF07724">
    <property type="entry name" value="AAA_2"/>
    <property type="match status" value="1"/>
</dbReference>
<dbReference type="Pfam" id="PF10431">
    <property type="entry name" value="ClpB_D2-small"/>
    <property type="match status" value="1"/>
</dbReference>
<dbReference type="Pfam" id="PF06689">
    <property type="entry name" value="zf-C4_ClpX"/>
    <property type="match status" value="1"/>
</dbReference>
<dbReference type="SMART" id="SM00382">
    <property type="entry name" value="AAA"/>
    <property type="match status" value="1"/>
</dbReference>
<dbReference type="SMART" id="SM01086">
    <property type="entry name" value="ClpB_D2-small"/>
    <property type="match status" value="1"/>
</dbReference>
<dbReference type="SMART" id="SM00994">
    <property type="entry name" value="zf-C4_ClpX"/>
    <property type="match status" value="1"/>
</dbReference>
<dbReference type="SUPFAM" id="SSF57716">
    <property type="entry name" value="Glucocorticoid receptor-like (DNA-binding domain)"/>
    <property type="match status" value="1"/>
</dbReference>
<dbReference type="SUPFAM" id="SSF52540">
    <property type="entry name" value="P-loop containing nucleoside triphosphate hydrolases"/>
    <property type="match status" value="1"/>
</dbReference>
<dbReference type="PROSITE" id="PS51902">
    <property type="entry name" value="CLPX_ZB"/>
    <property type="match status" value="1"/>
</dbReference>
<reference key="1">
    <citation type="journal article" date="2004" name="Proc. Natl. Acad. Sci. U.S.A.">
        <title>Genome sequence of the enterobacterial phytopathogen Erwinia carotovora subsp. atroseptica and characterization of virulence factors.</title>
        <authorList>
            <person name="Bell K.S."/>
            <person name="Sebaihia M."/>
            <person name="Pritchard L."/>
            <person name="Holden M.T.G."/>
            <person name="Hyman L.J."/>
            <person name="Holeva M.C."/>
            <person name="Thomson N.R."/>
            <person name="Bentley S.D."/>
            <person name="Churcher L.J.C."/>
            <person name="Mungall K."/>
            <person name="Atkin R."/>
            <person name="Bason N."/>
            <person name="Brooks K."/>
            <person name="Chillingworth T."/>
            <person name="Clark K."/>
            <person name="Doggett J."/>
            <person name="Fraser A."/>
            <person name="Hance Z."/>
            <person name="Hauser H."/>
            <person name="Jagels K."/>
            <person name="Moule S."/>
            <person name="Norbertczak H."/>
            <person name="Ormond D."/>
            <person name="Price C."/>
            <person name="Quail M.A."/>
            <person name="Sanders M."/>
            <person name="Walker D."/>
            <person name="Whitehead S."/>
            <person name="Salmond G.P.C."/>
            <person name="Birch P.R.J."/>
            <person name="Parkhill J."/>
            <person name="Toth I.K."/>
        </authorList>
    </citation>
    <scope>NUCLEOTIDE SEQUENCE [LARGE SCALE GENOMIC DNA]</scope>
    <source>
        <strain>SCRI 1043 / ATCC BAA-672</strain>
    </source>
</reference>
<accession>Q6D826</accession>
<proteinExistence type="inferred from homology"/>
<comment type="function">
    <text evidence="1">ATP-dependent specificity component of the Clp protease. It directs the protease to specific substrates. Can perform chaperone functions in the absence of ClpP.</text>
</comment>
<comment type="subunit">
    <text evidence="1">Component of the ClpX-ClpP complex. Forms a hexameric ring that, in the presence of ATP, binds to fourteen ClpP subunits assembled into a disk-like structure with a central cavity, resembling the structure of eukaryotic proteasomes.</text>
</comment>
<comment type="similarity">
    <text evidence="1">Belongs to the ClpX chaperone family.</text>
</comment>
<feature type="chain" id="PRO_0000160356" description="ATP-dependent Clp protease ATP-binding subunit ClpX">
    <location>
        <begin position="1"/>
        <end position="424"/>
    </location>
</feature>
<feature type="domain" description="ClpX-type ZB" evidence="2">
    <location>
        <begin position="2"/>
        <end position="56"/>
    </location>
</feature>
<feature type="binding site" evidence="2">
    <location>
        <position position="15"/>
    </location>
    <ligand>
        <name>Zn(2+)</name>
        <dbReference type="ChEBI" id="CHEBI:29105"/>
    </ligand>
</feature>
<feature type="binding site" evidence="2">
    <location>
        <position position="18"/>
    </location>
    <ligand>
        <name>Zn(2+)</name>
        <dbReference type="ChEBI" id="CHEBI:29105"/>
    </ligand>
</feature>
<feature type="binding site" evidence="2">
    <location>
        <position position="37"/>
    </location>
    <ligand>
        <name>Zn(2+)</name>
        <dbReference type="ChEBI" id="CHEBI:29105"/>
    </ligand>
</feature>
<feature type="binding site" evidence="2">
    <location>
        <position position="40"/>
    </location>
    <ligand>
        <name>Zn(2+)</name>
        <dbReference type="ChEBI" id="CHEBI:29105"/>
    </ligand>
</feature>
<feature type="binding site" evidence="1">
    <location>
        <begin position="120"/>
        <end position="127"/>
    </location>
    <ligand>
        <name>ATP</name>
        <dbReference type="ChEBI" id="CHEBI:30616"/>
    </ligand>
</feature>
<organism>
    <name type="scientific">Pectobacterium atrosepticum (strain SCRI 1043 / ATCC BAA-672)</name>
    <name type="common">Erwinia carotovora subsp. atroseptica</name>
    <dbReference type="NCBI Taxonomy" id="218491"/>
    <lineage>
        <taxon>Bacteria</taxon>
        <taxon>Pseudomonadati</taxon>
        <taxon>Pseudomonadota</taxon>
        <taxon>Gammaproteobacteria</taxon>
        <taxon>Enterobacterales</taxon>
        <taxon>Pectobacteriaceae</taxon>
        <taxon>Pectobacterium</taxon>
    </lineage>
</organism>
<gene>
    <name evidence="1" type="primary">clpX</name>
    <name type="ordered locus">ECA1149</name>
</gene>
<protein>
    <recommendedName>
        <fullName evidence="1">ATP-dependent Clp protease ATP-binding subunit ClpX</fullName>
    </recommendedName>
</protein>
<sequence>MTDKRKDGSGKLLYCSFCGKSQHEVRKLIAGPSVYICDECVDLCNDIIREEIKEVAPHRERSALPTPHEIRRHLDDYVIGQEQAKKVLAVAVYNHYKRLRNGDSSNGIELGKSNILLIGPTGSGKTLLAETLARFLDVPFTMADATTLTEAGYVGEDVENIIQKLLQKCDYDVQKAQRGIVYIDEIDKISRKSDNPSITRDVSGEGVQQALLKLIEGTIAAVPPQGGRKHPQQEFLQVDTSKILFICGGAFAGLDKVIEQRTDTGRGIGFNATVKGSAEKATEGELLSHVEPGDLIKFGLIPEFIGRLPVVATLRELSEDALIQILREPKNALTKQYQALFNLEGVELEFRDEALTAIAKKAMVRKTGARGLRSIVEAALLETMYDLPSLESVDKVVIDESVIAGHSEPLLIYGKHETQQASGE</sequence>
<name>CLPX_PECAS</name>